<accession>B6DCZ3</accession>
<evidence type="ECO:0000250" key="1"/>
<evidence type="ECO:0000255" key="2"/>
<evidence type="ECO:0000305" key="3"/>
<protein>
    <recommendedName>
        <fullName>U8-lycotoxin-Ls1m</fullName>
    </recommendedName>
    <alternativeName>
        <fullName>Toxin-like structure LSTX-H22</fullName>
    </alternativeName>
</protein>
<proteinExistence type="evidence at transcript level"/>
<comment type="subcellular location">
    <subcellularLocation>
        <location evidence="1">Secreted</location>
    </subcellularLocation>
</comment>
<comment type="tissue specificity">
    <text>Expressed by the venom gland.</text>
</comment>
<comment type="PTM">
    <text evidence="1">Contains 4 disulfide bonds.</text>
</comment>
<comment type="similarity">
    <text evidence="3">Belongs to the neurotoxin 19 (CSTX) family. 08 (U8-Lctx) subfamily.</text>
</comment>
<keyword id="KW-1015">Disulfide bond</keyword>
<keyword id="KW-0964">Secreted</keyword>
<keyword id="KW-0732">Signal</keyword>
<keyword id="KW-0800">Toxin</keyword>
<organism>
    <name type="scientific">Lycosa singoriensis</name>
    <name type="common">Wolf spider</name>
    <name type="synonym">Aranea singoriensis</name>
    <dbReference type="NCBI Taxonomy" id="434756"/>
    <lineage>
        <taxon>Eukaryota</taxon>
        <taxon>Metazoa</taxon>
        <taxon>Ecdysozoa</taxon>
        <taxon>Arthropoda</taxon>
        <taxon>Chelicerata</taxon>
        <taxon>Arachnida</taxon>
        <taxon>Araneae</taxon>
        <taxon>Araneomorphae</taxon>
        <taxon>Entelegynae</taxon>
        <taxon>Lycosoidea</taxon>
        <taxon>Lycosidae</taxon>
        <taxon>Lycosa</taxon>
    </lineage>
</organism>
<name>TX822_LYCSI</name>
<sequence length="77" mass="8597">MKLMIFTGLVLFAIVSLIEAQAENEKPCLPEYKVCTHAPGNCCSDLVCDCYGRYKSGAQIGRNCFCLQKGVIYKREN</sequence>
<feature type="signal peptide" evidence="2">
    <location>
        <begin position="1"/>
        <end position="20"/>
    </location>
</feature>
<feature type="propeptide" id="PRO_0000401805" evidence="1">
    <location>
        <begin position="21"/>
        <end position="26"/>
    </location>
</feature>
<feature type="chain" id="PRO_0000401806" description="U8-lycotoxin-Ls1m">
    <location>
        <begin position="27"/>
        <end position="77"/>
    </location>
</feature>
<dbReference type="EMBL" id="EU926077">
    <property type="protein sequence ID" value="ACI41409.1"/>
    <property type="molecule type" value="mRNA"/>
</dbReference>
<dbReference type="EMBL" id="FM864081">
    <property type="protein sequence ID" value="CAS03678.1"/>
    <property type="molecule type" value="mRNA"/>
</dbReference>
<dbReference type="SMR" id="B6DCZ3"/>
<dbReference type="ArachnoServer" id="AS001016">
    <property type="toxin name" value="U8-lycotoxin-Ls1m"/>
</dbReference>
<dbReference type="GO" id="GO:0005576">
    <property type="term" value="C:extracellular region"/>
    <property type="evidence" value="ECO:0007669"/>
    <property type="project" value="UniProtKB-SubCell"/>
</dbReference>
<dbReference type="GO" id="GO:0090729">
    <property type="term" value="F:toxin activity"/>
    <property type="evidence" value="ECO:0007669"/>
    <property type="project" value="UniProtKB-KW"/>
</dbReference>
<dbReference type="InterPro" id="IPR019553">
    <property type="entry name" value="Spider_toxin_CSTX_knottin"/>
</dbReference>
<dbReference type="Pfam" id="PF10530">
    <property type="entry name" value="Toxin_35"/>
    <property type="match status" value="1"/>
</dbReference>
<reference key="1">
    <citation type="journal article" date="2010" name="Zoology">
        <title>Transcriptome analysis of the venom glands of the Chinese wolf spider Lycosa singoriensis.</title>
        <authorList>
            <person name="Zhang Y."/>
            <person name="Chen J."/>
            <person name="Tang X."/>
            <person name="Wang F."/>
            <person name="Jiang L."/>
            <person name="Xiong X."/>
            <person name="Wang M."/>
            <person name="Rong M."/>
            <person name="Liu Z."/>
            <person name="Liang S."/>
        </authorList>
    </citation>
    <scope>NUCLEOTIDE SEQUENCE [LARGE SCALE MRNA]</scope>
    <source>
        <tissue>Venom gland</tissue>
    </source>
</reference>